<proteinExistence type="evidence at transcript level"/>
<name>OPSG3_PSAFA</name>
<reference key="1">
    <citation type="journal article" date="1994" name="J. Mol. Evol.">
        <title>Multiple origins of the green-sensitive opsin genes in fish.</title>
        <authorList>
            <person name="Register E.A."/>
            <person name="Yokoyama R."/>
            <person name="Yokoyama S."/>
        </authorList>
    </citation>
    <scope>NUCLEOTIDE SEQUENCE [GENOMIC DNA]</scope>
</reference>
<organism>
    <name type="scientific">Psalidodon fasciatus</name>
    <name type="common">Banded astyanax</name>
    <name type="synonym">Astyanax fasciatus</name>
    <dbReference type="NCBI Taxonomy" id="223369"/>
    <lineage>
        <taxon>Eukaryota</taxon>
        <taxon>Metazoa</taxon>
        <taxon>Chordata</taxon>
        <taxon>Craniata</taxon>
        <taxon>Vertebrata</taxon>
        <taxon>Euteleostomi</taxon>
        <taxon>Actinopterygii</taxon>
        <taxon>Neopterygii</taxon>
        <taxon>Teleostei</taxon>
        <taxon>Ostariophysi</taxon>
        <taxon>Characiformes</taxon>
        <taxon>Characoidei</taxon>
        <taxon>Acestrorhamphidae</taxon>
        <taxon>Acestrorhamphidae polyphyletic genera</taxon>
        <taxon>Psalidodon</taxon>
    </lineage>
</organism>
<keyword id="KW-0157">Chromophore</keyword>
<keyword id="KW-1015">Disulfide bond</keyword>
<keyword id="KW-0297">G-protein coupled receptor</keyword>
<keyword id="KW-0325">Glycoprotein</keyword>
<keyword id="KW-0472">Membrane</keyword>
<keyword id="KW-0597">Phosphoprotein</keyword>
<keyword id="KW-0600">Photoreceptor protein</keyword>
<keyword id="KW-0675">Receptor</keyword>
<keyword id="KW-0681">Retinal protein</keyword>
<keyword id="KW-0716">Sensory transduction</keyword>
<keyword id="KW-0807">Transducer</keyword>
<keyword id="KW-0812">Transmembrane</keyword>
<keyword id="KW-1133">Transmembrane helix</keyword>
<keyword id="KW-0844">Vision</keyword>
<evidence type="ECO:0000250" key="1"/>
<evidence type="ECO:0000255" key="2"/>
<evidence type="ECO:0000255" key="3">
    <source>
        <dbReference type="PROSITE-ProRule" id="PRU00521"/>
    </source>
</evidence>
<feature type="chain" id="PRO_0000197774" description="Green-sensitive opsin-3">
    <location>
        <begin position="1"/>
        <end position="354"/>
    </location>
</feature>
<feature type="topological domain" description="Extracellular" evidence="2">
    <location>
        <begin position="1"/>
        <end position="39"/>
    </location>
</feature>
<feature type="transmembrane region" description="Helical; Name=1" evidence="2">
    <location>
        <begin position="40"/>
        <end position="64"/>
    </location>
</feature>
<feature type="topological domain" description="Cytoplasmic" evidence="2">
    <location>
        <begin position="65"/>
        <end position="76"/>
    </location>
</feature>
<feature type="transmembrane region" description="Helical; Name=2" evidence="2">
    <location>
        <begin position="77"/>
        <end position="102"/>
    </location>
</feature>
<feature type="topological domain" description="Extracellular" evidence="2">
    <location>
        <begin position="103"/>
        <end position="116"/>
    </location>
</feature>
<feature type="transmembrane region" description="Helical; Name=3" evidence="2">
    <location>
        <begin position="117"/>
        <end position="136"/>
    </location>
</feature>
<feature type="topological domain" description="Cytoplasmic" evidence="2">
    <location>
        <begin position="137"/>
        <end position="155"/>
    </location>
</feature>
<feature type="transmembrane region" description="Helical; Name=4" evidence="2">
    <location>
        <begin position="156"/>
        <end position="179"/>
    </location>
</feature>
<feature type="topological domain" description="Extracellular" evidence="2">
    <location>
        <begin position="180"/>
        <end position="205"/>
    </location>
</feature>
<feature type="transmembrane region" description="Helical; Name=5" evidence="2">
    <location>
        <begin position="206"/>
        <end position="233"/>
    </location>
</feature>
<feature type="topological domain" description="Cytoplasmic" evidence="2">
    <location>
        <begin position="234"/>
        <end position="255"/>
    </location>
</feature>
<feature type="transmembrane region" description="Helical; Name=6" evidence="2">
    <location>
        <begin position="256"/>
        <end position="279"/>
    </location>
</feature>
<feature type="topological domain" description="Extracellular" evidence="2">
    <location>
        <begin position="280"/>
        <end position="287"/>
    </location>
</feature>
<feature type="transmembrane region" description="Helical; Name=7" evidence="2">
    <location>
        <begin position="288"/>
        <end position="312"/>
    </location>
</feature>
<feature type="topological domain" description="Cytoplasmic" evidence="2">
    <location>
        <begin position="313"/>
        <end position="354"/>
    </location>
</feature>
<feature type="modified residue" description="N6-(retinylidene)lysine" evidence="1">
    <location>
        <position position="299"/>
    </location>
</feature>
<feature type="glycosylation site" description="N-linked (GlcNAc...) asparagine" evidence="2">
    <location>
        <position position="18"/>
    </location>
</feature>
<feature type="glycosylation site" description="N-linked (GlcNAc...) asparagine" evidence="2">
    <location>
        <position position="203"/>
    </location>
</feature>
<feature type="disulfide bond" evidence="3">
    <location>
        <begin position="113"/>
        <end position="190"/>
    </location>
</feature>
<comment type="function">
    <text>Visual pigments are the light-absorbing molecules that mediate vision. They consist of an apoprotein, opsin, covalently linked to cis-retinal.</text>
</comment>
<comment type="subcellular location">
    <subcellularLocation>
        <location>Membrane</location>
        <topology>Multi-pass membrane protein</topology>
    </subcellularLocation>
</comment>
<comment type="tissue specificity">
    <text>The color pigments are found in the cone photoreceptor cells.</text>
</comment>
<comment type="miscellaneous">
    <text>This fish possesses three genes for green opsin. Two (G103 and G101) that belong to the LWS/MWS group and one (RH11) that belongs to the RH2 group.</text>
</comment>
<comment type="similarity">
    <text evidence="3">Belongs to the G-protein coupled receptor 1 family. Opsin subfamily.</text>
</comment>
<protein>
    <recommendedName>
        <fullName>Green-sensitive opsin-3</fullName>
    </recommendedName>
    <alternativeName>
        <fullName>Green cone photoreceptor pigment 3</fullName>
    </alternativeName>
</protein>
<sequence length="354" mass="39117">MSGLNGFEGDNFYIPMSNRTGLVRDPFVYEQYYLAEPWQFKLLACYMFFLICLGLPINGFTLFVTAQHKKLQQPLNFILVNLAVAGMIMVCFGFTITISSAVNGYFYFGPTACAIEGFMATLGGEVALWSLVVLAIERYIVVCKPMGSFKFSASHALGGIGFTWFMAMTCAAPPLVGWSRYIPEGLQCSCGPDYYTLNPKYNNESYVIYMFVVHFIVPVTVIFFTYGRLVCTVKSAAAAQQDSASTQKAEKEVTRMVILMVVGFLVAWTPYATVAAWIFFNKGAAFTAQFMAVPAFFSKSSALFNPIIYVLLNKQFRNCMLTTLFCGKNPLGDEESSTVSTKTEVSTVSSVSPA</sequence>
<gene>
    <name type="primary">RH11</name>
</gene>
<accession>P51474</accession>
<dbReference type="EMBL" id="S75255">
    <property type="protein sequence ID" value="AAB32221.2"/>
    <property type="molecule type" value="Genomic_DNA"/>
</dbReference>
<dbReference type="EMBL" id="S75251">
    <property type="protein sequence ID" value="AAB32221.2"/>
    <property type="status" value="JOINED"/>
    <property type="molecule type" value="Genomic_DNA"/>
</dbReference>
<dbReference type="EMBL" id="S75252">
    <property type="protein sequence ID" value="AAB32221.2"/>
    <property type="status" value="JOINED"/>
    <property type="molecule type" value="Genomic_DNA"/>
</dbReference>
<dbReference type="EMBL" id="S75253">
    <property type="protein sequence ID" value="AAB32221.2"/>
    <property type="status" value="JOINED"/>
    <property type="molecule type" value="Genomic_DNA"/>
</dbReference>
<dbReference type="EMBL" id="S75254">
    <property type="protein sequence ID" value="AAB32221.2"/>
    <property type="status" value="JOINED"/>
    <property type="molecule type" value="Genomic_DNA"/>
</dbReference>
<dbReference type="PIR" id="I51266">
    <property type="entry name" value="I51266"/>
</dbReference>
<dbReference type="SMR" id="P51474"/>
<dbReference type="GlyCosmos" id="P51474">
    <property type="glycosylation" value="2 sites, No reported glycans"/>
</dbReference>
<dbReference type="GO" id="GO:0016020">
    <property type="term" value="C:membrane"/>
    <property type="evidence" value="ECO:0007669"/>
    <property type="project" value="UniProtKB-SubCell"/>
</dbReference>
<dbReference type="GO" id="GO:0004930">
    <property type="term" value="F:G protein-coupled receptor activity"/>
    <property type="evidence" value="ECO:0007669"/>
    <property type="project" value="UniProtKB-KW"/>
</dbReference>
<dbReference type="GO" id="GO:0009881">
    <property type="term" value="F:photoreceptor activity"/>
    <property type="evidence" value="ECO:0007669"/>
    <property type="project" value="UniProtKB-KW"/>
</dbReference>
<dbReference type="GO" id="GO:0007602">
    <property type="term" value="P:phototransduction"/>
    <property type="evidence" value="ECO:0007669"/>
    <property type="project" value="UniProtKB-KW"/>
</dbReference>
<dbReference type="GO" id="GO:0007601">
    <property type="term" value="P:visual perception"/>
    <property type="evidence" value="ECO:0007669"/>
    <property type="project" value="UniProtKB-KW"/>
</dbReference>
<dbReference type="FunFam" id="1.20.1070.10:FF:000018">
    <property type="entry name" value="Rhodopsin"/>
    <property type="match status" value="1"/>
</dbReference>
<dbReference type="Gene3D" id="1.20.1070.10">
    <property type="entry name" value="Rhodopsin 7-helix transmembrane proteins"/>
    <property type="match status" value="1"/>
</dbReference>
<dbReference type="InterPro" id="IPR050125">
    <property type="entry name" value="GPCR_opsins"/>
</dbReference>
<dbReference type="InterPro" id="IPR000276">
    <property type="entry name" value="GPCR_Rhodpsn"/>
</dbReference>
<dbReference type="InterPro" id="IPR017452">
    <property type="entry name" value="GPCR_Rhodpsn_7TM"/>
</dbReference>
<dbReference type="InterPro" id="IPR001760">
    <property type="entry name" value="Opsin"/>
</dbReference>
<dbReference type="InterPro" id="IPR027430">
    <property type="entry name" value="Retinal_BS"/>
</dbReference>
<dbReference type="InterPro" id="IPR000732">
    <property type="entry name" value="Rhodopsin"/>
</dbReference>
<dbReference type="InterPro" id="IPR019477">
    <property type="entry name" value="Rhodopsin_N"/>
</dbReference>
<dbReference type="PANTHER" id="PTHR24240">
    <property type="entry name" value="OPSIN"/>
    <property type="match status" value="1"/>
</dbReference>
<dbReference type="Pfam" id="PF00001">
    <property type="entry name" value="7tm_1"/>
    <property type="match status" value="1"/>
</dbReference>
<dbReference type="Pfam" id="PF10413">
    <property type="entry name" value="Rhodopsin_N"/>
    <property type="match status" value="1"/>
</dbReference>
<dbReference type="PRINTS" id="PR00237">
    <property type="entry name" value="GPCRRHODOPSN"/>
</dbReference>
<dbReference type="PRINTS" id="PR00238">
    <property type="entry name" value="OPSIN"/>
</dbReference>
<dbReference type="PRINTS" id="PR00579">
    <property type="entry name" value="RHODOPSIN"/>
</dbReference>
<dbReference type="SUPFAM" id="SSF81321">
    <property type="entry name" value="Family A G protein-coupled receptor-like"/>
    <property type="match status" value="1"/>
</dbReference>
<dbReference type="PROSITE" id="PS00237">
    <property type="entry name" value="G_PROTEIN_RECEP_F1_1"/>
    <property type="match status" value="1"/>
</dbReference>
<dbReference type="PROSITE" id="PS50262">
    <property type="entry name" value="G_PROTEIN_RECEP_F1_2"/>
    <property type="match status" value="1"/>
</dbReference>
<dbReference type="PROSITE" id="PS00238">
    <property type="entry name" value="OPSIN"/>
    <property type="match status" value="1"/>
</dbReference>